<sequence length="419" mass="44741">MDKFRVQGPTTLQGEVTISGAKNAALPILFAALLAEEPVEIQNVPKLKDVDTSMKLLSQLGAKVERNGSVHIDASQVNVFCAPYDLVKTMRASIWALGPLVARFGQGQVSLPGGCTIGARPVDLHITGLEQLGATIKLEEGYVKASVEGRLKGAHIVMDKVSVGATVTIMCAATLAEGTTIIENAAREPEIVDTANFLVTLGAKIAGQGTDRITIEGVERLGGGVYRVLPDRIETGTFLVAAAISRGKILCRNAQPDTLDAVLAKLRDAGADIEVGEDWISLDMHGKRPKAVNVRTAPHPAFPTDMQAQFTLLNLVAEGTGFITETVFENRFMHVPELSRMGARAEIESNTVICHGVETLSGAQVMATDLRASASLVLAGCIAEGTTIVDRIYHIDRGYERIEDKLRALGANIERVKGE</sequence>
<organism>
    <name type="scientific">Salmonella typhi</name>
    <dbReference type="NCBI Taxonomy" id="90370"/>
    <lineage>
        <taxon>Bacteria</taxon>
        <taxon>Pseudomonadati</taxon>
        <taxon>Pseudomonadota</taxon>
        <taxon>Gammaproteobacteria</taxon>
        <taxon>Enterobacterales</taxon>
        <taxon>Enterobacteriaceae</taxon>
        <taxon>Salmonella</taxon>
    </lineage>
</organism>
<gene>
    <name evidence="1" type="primary">murA</name>
    <name type="ordered locus">STY3486</name>
    <name type="ordered locus">t3224</name>
</gene>
<comment type="function">
    <text evidence="1">Cell wall formation. Adds enolpyruvyl to UDP-N-acetylglucosamine.</text>
</comment>
<comment type="catalytic activity">
    <reaction evidence="1">
        <text>phosphoenolpyruvate + UDP-N-acetyl-alpha-D-glucosamine = UDP-N-acetyl-3-O-(1-carboxyvinyl)-alpha-D-glucosamine + phosphate</text>
        <dbReference type="Rhea" id="RHEA:18681"/>
        <dbReference type="ChEBI" id="CHEBI:43474"/>
        <dbReference type="ChEBI" id="CHEBI:57705"/>
        <dbReference type="ChEBI" id="CHEBI:58702"/>
        <dbReference type="ChEBI" id="CHEBI:68483"/>
        <dbReference type="EC" id="2.5.1.7"/>
    </reaction>
</comment>
<comment type="pathway">
    <text evidence="1">Cell wall biogenesis; peptidoglycan biosynthesis.</text>
</comment>
<comment type="subcellular location">
    <subcellularLocation>
        <location evidence="1">Cytoplasm</location>
    </subcellularLocation>
</comment>
<comment type="similarity">
    <text evidence="1">Belongs to the EPSP synthase family. MurA subfamily.</text>
</comment>
<name>MURA_SALTI</name>
<keyword id="KW-0131">Cell cycle</keyword>
<keyword id="KW-0132">Cell division</keyword>
<keyword id="KW-0133">Cell shape</keyword>
<keyword id="KW-0961">Cell wall biogenesis/degradation</keyword>
<keyword id="KW-0963">Cytoplasm</keyword>
<keyword id="KW-0573">Peptidoglycan synthesis</keyword>
<keyword id="KW-0670">Pyruvate</keyword>
<keyword id="KW-0808">Transferase</keyword>
<accession>P65455</accession>
<accession>Q8XF63</accession>
<protein>
    <recommendedName>
        <fullName evidence="1">UDP-N-acetylglucosamine 1-carboxyvinyltransferase</fullName>
        <ecNumber evidence="1">2.5.1.7</ecNumber>
    </recommendedName>
    <alternativeName>
        <fullName evidence="1">Enoylpyruvate transferase</fullName>
    </alternativeName>
    <alternativeName>
        <fullName evidence="1">UDP-N-acetylglucosamine enolpyruvyl transferase</fullName>
        <shortName evidence="1">EPT</shortName>
    </alternativeName>
</protein>
<proteinExistence type="inferred from homology"/>
<evidence type="ECO:0000255" key="1">
    <source>
        <dbReference type="HAMAP-Rule" id="MF_00111"/>
    </source>
</evidence>
<feature type="chain" id="PRO_0000178911" description="UDP-N-acetylglucosamine 1-carboxyvinyltransferase">
    <location>
        <begin position="1"/>
        <end position="419"/>
    </location>
</feature>
<feature type="active site" description="Proton donor" evidence="1">
    <location>
        <position position="115"/>
    </location>
</feature>
<feature type="binding site" evidence="1">
    <location>
        <begin position="22"/>
        <end position="23"/>
    </location>
    <ligand>
        <name>phosphoenolpyruvate</name>
        <dbReference type="ChEBI" id="CHEBI:58702"/>
    </ligand>
</feature>
<feature type="binding site" evidence="1">
    <location>
        <position position="91"/>
    </location>
    <ligand>
        <name>UDP-N-acetyl-alpha-D-glucosamine</name>
        <dbReference type="ChEBI" id="CHEBI:57705"/>
    </ligand>
</feature>
<feature type="binding site" evidence="1">
    <location>
        <begin position="120"/>
        <end position="124"/>
    </location>
    <ligand>
        <name>UDP-N-acetyl-alpha-D-glucosamine</name>
        <dbReference type="ChEBI" id="CHEBI:57705"/>
    </ligand>
</feature>
<feature type="binding site" evidence="1">
    <location>
        <begin position="160"/>
        <end position="163"/>
    </location>
    <ligand>
        <name>UDP-N-acetyl-alpha-D-glucosamine</name>
        <dbReference type="ChEBI" id="CHEBI:57705"/>
    </ligand>
</feature>
<feature type="binding site" evidence="1">
    <location>
        <position position="305"/>
    </location>
    <ligand>
        <name>UDP-N-acetyl-alpha-D-glucosamine</name>
        <dbReference type="ChEBI" id="CHEBI:57705"/>
    </ligand>
</feature>
<feature type="binding site" evidence="1">
    <location>
        <position position="327"/>
    </location>
    <ligand>
        <name>UDP-N-acetyl-alpha-D-glucosamine</name>
        <dbReference type="ChEBI" id="CHEBI:57705"/>
    </ligand>
</feature>
<feature type="modified residue" description="2-(S-cysteinyl)pyruvic acid O-phosphothioketal" evidence="1">
    <location>
        <position position="115"/>
    </location>
</feature>
<dbReference type="EC" id="2.5.1.7" evidence="1"/>
<dbReference type="EMBL" id="AL513382">
    <property type="protein sequence ID" value="CAD07824.1"/>
    <property type="molecule type" value="Genomic_DNA"/>
</dbReference>
<dbReference type="EMBL" id="AE014613">
    <property type="protein sequence ID" value="AAO70760.1"/>
    <property type="molecule type" value="Genomic_DNA"/>
</dbReference>
<dbReference type="RefSeq" id="NP_457686.1">
    <property type="nucleotide sequence ID" value="NC_003198.1"/>
</dbReference>
<dbReference type="RefSeq" id="WP_000357288.1">
    <property type="nucleotide sequence ID" value="NZ_WSUR01000003.1"/>
</dbReference>
<dbReference type="SMR" id="P65455"/>
<dbReference type="STRING" id="220341.gene:17587337"/>
<dbReference type="KEGG" id="stt:t3224"/>
<dbReference type="KEGG" id="sty:STY3486"/>
<dbReference type="PATRIC" id="fig|220341.7.peg.3550"/>
<dbReference type="eggNOG" id="COG0766">
    <property type="taxonomic scope" value="Bacteria"/>
</dbReference>
<dbReference type="HOGENOM" id="CLU_027387_0_0_6"/>
<dbReference type="OMA" id="MIEIGSW"/>
<dbReference type="OrthoDB" id="9803760at2"/>
<dbReference type="UniPathway" id="UPA00219"/>
<dbReference type="Proteomes" id="UP000000541">
    <property type="component" value="Chromosome"/>
</dbReference>
<dbReference type="Proteomes" id="UP000002670">
    <property type="component" value="Chromosome"/>
</dbReference>
<dbReference type="GO" id="GO:0005737">
    <property type="term" value="C:cytoplasm"/>
    <property type="evidence" value="ECO:0007669"/>
    <property type="project" value="UniProtKB-SubCell"/>
</dbReference>
<dbReference type="GO" id="GO:0008760">
    <property type="term" value="F:UDP-N-acetylglucosamine 1-carboxyvinyltransferase activity"/>
    <property type="evidence" value="ECO:0007669"/>
    <property type="project" value="UniProtKB-UniRule"/>
</dbReference>
<dbReference type="GO" id="GO:0051301">
    <property type="term" value="P:cell division"/>
    <property type="evidence" value="ECO:0007669"/>
    <property type="project" value="UniProtKB-KW"/>
</dbReference>
<dbReference type="GO" id="GO:0071555">
    <property type="term" value="P:cell wall organization"/>
    <property type="evidence" value="ECO:0007669"/>
    <property type="project" value="UniProtKB-KW"/>
</dbReference>
<dbReference type="GO" id="GO:0009252">
    <property type="term" value="P:peptidoglycan biosynthetic process"/>
    <property type="evidence" value="ECO:0007669"/>
    <property type="project" value="UniProtKB-UniRule"/>
</dbReference>
<dbReference type="GO" id="GO:0008360">
    <property type="term" value="P:regulation of cell shape"/>
    <property type="evidence" value="ECO:0007669"/>
    <property type="project" value="UniProtKB-KW"/>
</dbReference>
<dbReference type="GO" id="GO:0019277">
    <property type="term" value="P:UDP-N-acetylgalactosamine biosynthetic process"/>
    <property type="evidence" value="ECO:0007669"/>
    <property type="project" value="InterPro"/>
</dbReference>
<dbReference type="CDD" id="cd01555">
    <property type="entry name" value="UdpNAET"/>
    <property type="match status" value="1"/>
</dbReference>
<dbReference type="FunFam" id="3.65.10.10:FF:000002">
    <property type="entry name" value="UDP-N-acetylglucosamine 1-carboxyvinyltransferase"/>
    <property type="match status" value="1"/>
</dbReference>
<dbReference type="Gene3D" id="3.65.10.10">
    <property type="entry name" value="Enolpyruvate transferase domain"/>
    <property type="match status" value="2"/>
</dbReference>
<dbReference type="HAMAP" id="MF_00111">
    <property type="entry name" value="MurA"/>
    <property type="match status" value="1"/>
</dbReference>
<dbReference type="InterPro" id="IPR001986">
    <property type="entry name" value="Enolpyruvate_Tfrase_dom"/>
</dbReference>
<dbReference type="InterPro" id="IPR036968">
    <property type="entry name" value="Enolpyruvate_Tfrase_sf"/>
</dbReference>
<dbReference type="InterPro" id="IPR050068">
    <property type="entry name" value="MurA_subfamily"/>
</dbReference>
<dbReference type="InterPro" id="IPR013792">
    <property type="entry name" value="RNA3'P_cycl/enolpyr_Trfase_a/b"/>
</dbReference>
<dbReference type="InterPro" id="IPR005750">
    <property type="entry name" value="UDP_GlcNAc_COvinyl_MurA"/>
</dbReference>
<dbReference type="NCBIfam" id="TIGR01072">
    <property type="entry name" value="murA"/>
    <property type="match status" value="1"/>
</dbReference>
<dbReference type="NCBIfam" id="NF006873">
    <property type="entry name" value="PRK09369.1"/>
    <property type="match status" value="1"/>
</dbReference>
<dbReference type="PANTHER" id="PTHR43783">
    <property type="entry name" value="UDP-N-ACETYLGLUCOSAMINE 1-CARBOXYVINYLTRANSFERASE"/>
    <property type="match status" value="1"/>
</dbReference>
<dbReference type="PANTHER" id="PTHR43783:SF1">
    <property type="entry name" value="UDP-N-ACETYLGLUCOSAMINE 1-CARBOXYVINYLTRANSFERASE"/>
    <property type="match status" value="1"/>
</dbReference>
<dbReference type="Pfam" id="PF00275">
    <property type="entry name" value="EPSP_synthase"/>
    <property type="match status" value="1"/>
</dbReference>
<dbReference type="SUPFAM" id="SSF55205">
    <property type="entry name" value="EPT/RTPC-like"/>
    <property type="match status" value="1"/>
</dbReference>
<reference key="1">
    <citation type="journal article" date="2001" name="Nature">
        <title>Complete genome sequence of a multiple drug resistant Salmonella enterica serovar Typhi CT18.</title>
        <authorList>
            <person name="Parkhill J."/>
            <person name="Dougan G."/>
            <person name="James K.D."/>
            <person name="Thomson N.R."/>
            <person name="Pickard D."/>
            <person name="Wain J."/>
            <person name="Churcher C.M."/>
            <person name="Mungall K.L."/>
            <person name="Bentley S.D."/>
            <person name="Holden M.T.G."/>
            <person name="Sebaihia M."/>
            <person name="Baker S."/>
            <person name="Basham D."/>
            <person name="Brooks K."/>
            <person name="Chillingworth T."/>
            <person name="Connerton P."/>
            <person name="Cronin A."/>
            <person name="Davis P."/>
            <person name="Davies R.M."/>
            <person name="Dowd L."/>
            <person name="White N."/>
            <person name="Farrar J."/>
            <person name="Feltwell T."/>
            <person name="Hamlin N."/>
            <person name="Haque A."/>
            <person name="Hien T.T."/>
            <person name="Holroyd S."/>
            <person name="Jagels K."/>
            <person name="Krogh A."/>
            <person name="Larsen T.S."/>
            <person name="Leather S."/>
            <person name="Moule S."/>
            <person name="O'Gaora P."/>
            <person name="Parry C."/>
            <person name="Quail M.A."/>
            <person name="Rutherford K.M."/>
            <person name="Simmonds M."/>
            <person name="Skelton J."/>
            <person name="Stevens K."/>
            <person name="Whitehead S."/>
            <person name="Barrell B.G."/>
        </authorList>
    </citation>
    <scope>NUCLEOTIDE SEQUENCE [LARGE SCALE GENOMIC DNA]</scope>
    <source>
        <strain>CT18</strain>
    </source>
</reference>
<reference key="2">
    <citation type="journal article" date="2003" name="J. Bacteriol.">
        <title>Comparative genomics of Salmonella enterica serovar Typhi strains Ty2 and CT18.</title>
        <authorList>
            <person name="Deng W."/>
            <person name="Liou S.-R."/>
            <person name="Plunkett G. III"/>
            <person name="Mayhew G.F."/>
            <person name="Rose D.J."/>
            <person name="Burland V."/>
            <person name="Kodoyianni V."/>
            <person name="Schwartz D.C."/>
            <person name="Blattner F.R."/>
        </authorList>
    </citation>
    <scope>NUCLEOTIDE SEQUENCE [LARGE SCALE GENOMIC DNA]</scope>
    <source>
        <strain>ATCC 700931 / Ty2</strain>
    </source>
</reference>